<accession>B1XKB3</accession>
<protein>
    <recommendedName>
        <fullName evidence="1">Protoheme IX farnesyltransferase</fullName>
        <ecNumber evidence="1">2.5.1.141</ecNumber>
    </recommendedName>
    <alternativeName>
        <fullName evidence="1">Heme B farnesyltransferase</fullName>
    </alternativeName>
    <alternativeName>
        <fullName evidence="1">Heme O synthase</fullName>
    </alternativeName>
</protein>
<sequence>MLGTSLSPHHENFWAVIKSYYQLTKPRIIPLLLITTAASMWIASHGHIDPVKLLITLLGGTLAAASAQTLNCIYDQDIDFSMQRTRKRPIPSGRVQPRHALIFALILGSLSFSLLMVFVNLLSACLALSGIVFYMLVYTHWLKRHHVQNIVIGGAAGSIPPLVGWAAVTGQLDWSAWILFALIFLWTPPHFWALALMIKEDYAEVEVPMLPVVKGEKITVDQIWIYTLIVVPFSLLLVFPFQASGLFYAIAALVLGAIFIQKAWELKQNPFDQSLAKSMFKYSILYMMLLCTAMVVDSLPAVHDVTALVTTTLASLT</sequence>
<reference key="1">
    <citation type="submission" date="2008-02" db="EMBL/GenBank/DDBJ databases">
        <title>Complete sequence of Synechococcus sp. PCC 7002.</title>
        <authorList>
            <person name="Li T."/>
            <person name="Zhao J."/>
            <person name="Zhao C."/>
            <person name="Liu Z."/>
            <person name="Zhao F."/>
            <person name="Marquardt J."/>
            <person name="Nomura C.T."/>
            <person name="Persson S."/>
            <person name="Detter J.C."/>
            <person name="Richardson P.M."/>
            <person name="Lanz C."/>
            <person name="Schuster S.C."/>
            <person name="Wang J."/>
            <person name="Li S."/>
            <person name="Huang X."/>
            <person name="Cai T."/>
            <person name="Yu Z."/>
            <person name="Luo J."/>
            <person name="Zhao J."/>
            <person name="Bryant D.A."/>
        </authorList>
    </citation>
    <scope>NUCLEOTIDE SEQUENCE [LARGE SCALE GENOMIC DNA]</scope>
    <source>
        <strain>ATCC 27264 / PCC 7002 / PR-6</strain>
    </source>
</reference>
<proteinExistence type="inferred from homology"/>
<feature type="chain" id="PRO_0000346079" description="Protoheme IX farnesyltransferase">
    <location>
        <begin position="1"/>
        <end position="317"/>
    </location>
</feature>
<feature type="transmembrane region" description="Helical" evidence="1">
    <location>
        <begin position="28"/>
        <end position="48"/>
    </location>
</feature>
<feature type="transmembrane region" description="Helical" evidence="1">
    <location>
        <begin position="53"/>
        <end position="73"/>
    </location>
</feature>
<feature type="transmembrane region" description="Helical" evidence="1">
    <location>
        <begin position="101"/>
        <end position="121"/>
    </location>
</feature>
<feature type="transmembrane region" description="Helical" evidence="1">
    <location>
        <begin position="122"/>
        <end position="142"/>
    </location>
</feature>
<feature type="transmembrane region" description="Helical" evidence="1">
    <location>
        <begin position="150"/>
        <end position="170"/>
    </location>
</feature>
<feature type="transmembrane region" description="Helical" evidence="1">
    <location>
        <begin position="178"/>
        <end position="198"/>
    </location>
</feature>
<feature type="transmembrane region" description="Helical" evidence="1">
    <location>
        <begin position="223"/>
        <end position="243"/>
    </location>
</feature>
<feature type="transmembrane region" description="Helical" evidence="1">
    <location>
        <begin position="246"/>
        <end position="266"/>
    </location>
</feature>
<feature type="transmembrane region" description="Helical" evidence="1">
    <location>
        <begin position="282"/>
        <end position="302"/>
    </location>
</feature>
<comment type="function">
    <text evidence="1">Converts heme B (protoheme IX) to heme O by substitution of the vinyl group on carbon 2 of heme B porphyrin ring with a hydroxyethyl farnesyl side group.</text>
</comment>
<comment type="catalytic activity">
    <reaction evidence="1">
        <text>heme b + (2E,6E)-farnesyl diphosphate + H2O = Fe(II)-heme o + diphosphate</text>
        <dbReference type="Rhea" id="RHEA:28070"/>
        <dbReference type="ChEBI" id="CHEBI:15377"/>
        <dbReference type="ChEBI" id="CHEBI:33019"/>
        <dbReference type="ChEBI" id="CHEBI:60344"/>
        <dbReference type="ChEBI" id="CHEBI:60530"/>
        <dbReference type="ChEBI" id="CHEBI:175763"/>
        <dbReference type="EC" id="2.5.1.141"/>
    </reaction>
</comment>
<comment type="pathway">
    <text evidence="1">Porphyrin-containing compound metabolism; heme O biosynthesis; heme O from protoheme: step 1/1.</text>
</comment>
<comment type="subcellular location">
    <subcellularLocation>
        <location evidence="1">Cell inner membrane</location>
        <topology evidence="1">Multi-pass membrane protein</topology>
    </subcellularLocation>
</comment>
<comment type="miscellaneous">
    <text evidence="1">Carbon 2 of the heme B porphyrin ring is defined according to the Fischer nomenclature.</text>
</comment>
<comment type="similarity">
    <text evidence="1">Belongs to the UbiA prenyltransferase family. Protoheme IX farnesyltransferase subfamily.</text>
</comment>
<gene>
    <name evidence="1" type="primary">ctaB</name>
    <name type="ordered locus">SYNPCC7002_A1160</name>
</gene>
<keyword id="KW-0997">Cell inner membrane</keyword>
<keyword id="KW-1003">Cell membrane</keyword>
<keyword id="KW-0350">Heme biosynthesis</keyword>
<keyword id="KW-0472">Membrane</keyword>
<keyword id="KW-1185">Reference proteome</keyword>
<keyword id="KW-0808">Transferase</keyword>
<keyword id="KW-0812">Transmembrane</keyword>
<keyword id="KW-1133">Transmembrane helix</keyword>
<organism>
    <name type="scientific">Picosynechococcus sp. (strain ATCC 27264 / PCC 7002 / PR-6)</name>
    <name type="common">Agmenellum quadruplicatum</name>
    <dbReference type="NCBI Taxonomy" id="32049"/>
    <lineage>
        <taxon>Bacteria</taxon>
        <taxon>Bacillati</taxon>
        <taxon>Cyanobacteriota</taxon>
        <taxon>Cyanophyceae</taxon>
        <taxon>Oscillatoriophycideae</taxon>
        <taxon>Chroococcales</taxon>
        <taxon>Geminocystaceae</taxon>
        <taxon>Picosynechococcus</taxon>
    </lineage>
</organism>
<name>COXX_PICP2</name>
<dbReference type="EC" id="2.5.1.141" evidence="1"/>
<dbReference type="EMBL" id="CP000951">
    <property type="protein sequence ID" value="ACA99159.1"/>
    <property type="molecule type" value="Genomic_DNA"/>
</dbReference>
<dbReference type="RefSeq" id="WP_012306782.1">
    <property type="nucleotide sequence ID" value="NZ_JAHHPU010000001.1"/>
</dbReference>
<dbReference type="SMR" id="B1XKB3"/>
<dbReference type="STRING" id="32049.SYNPCC7002_A1160"/>
<dbReference type="KEGG" id="syp:SYNPCC7002_A1160"/>
<dbReference type="eggNOG" id="COG0109">
    <property type="taxonomic scope" value="Bacteria"/>
</dbReference>
<dbReference type="HOGENOM" id="CLU_029631_0_2_3"/>
<dbReference type="UniPathway" id="UPA00834">
    <property type="reaction ID" value="UER00712"/>
</dbReference>
<dbReference type="Proteomes" id="UP000001688">
    <property type="component" value="Chromosome"/>
</dbReference>
<dbReference type="GO" id="GO:0005886">
    <property type="term" value="C:plasma membrane"/>
    <property type="evidence" value="ECO:0007669"/>
    <property type="project" value="UniProtKB-SubCell"/>
</dbReference>
<dbReference type="GO" id="GO:0008495">
    <property type="term" value="F:protoheme IX farnesyltransferase activity"/>
    <property type="evidence" value="ECO:0007669"/>
    <property type="project" value="UniProtKB-UniRule"/>
</dbReference>
<dbReference type="GO" id="GO:0048034">
    <property type="term" value="P:heme O biosynthetic process"/>
    <property type="evidence" value="ECO:0007669"/>
    <property type="project" value="UniProtKB-UniRule"/>
</dbReference>
<dbReference type="CDD" id="cd13957">
    <property type="entry name" value="PT_UbiA_Cox10"/>
    <property type="match status" value="1"/>
</dbReference>
<dbReference type="FunFam" id="1.10.357.140:FF:000001">
    <property type="entry name" value="Protoheme IX farnesyltransferase"/>
    <property type="match status" value="1"/>
</dbReference>
<dbReference type="Gene3D" id="1.10.357.140">
    <property type="entry name" value="UbiA prenyltransferase"/>
    <property type="match status" value="1"/>
</dbReference>
<dbReference type="HAMAP" id="MF_00154">
    <property type="entry name" value="CyoE_CtaB"/>
    <property type="match status" value="1"/>
</dbReference>
<dbReference type="InterPro" id="IPR006369">
    <property type="entry name" value="Protohaem_IX_farnesylTrfase"/>
</dbReference>
<dbReference type="InterPro" id="IPR000537">
    <property type="entry name" value="UbiA_prenyltransferase"/>
</dbReference>
<dbReference type="InterPro" id="IPR030470">
    <property type="entry name" value="UbiA_prenylTrfase_CS"/>
</dbReference>
<dbReference type="InterPro" id="IPR044878">
    <property type="entry name" value="UbiA_sf"/>
</dbReference>
<dbReference type="NCBIfam" id="TIGR01473">
    <property type="entry name" value="cyoE_ctaB"/>
    <property type="match status" value="1"/>
</dbReference>
<dbReference type="NCBIfam" id="NF003349">
    <property type="entry name" value="PRK04375.1-2"/>
    <property type="match status" value="1"/>
</dbReference>
<dbReference type="PANTHER" id="PTHR43448:SF7">
    <property type="entry name" value="4-HYDROXYBENZOATE SOLANESYLTRANSFERASE"/>
    <property type="match status" value="1"/>
</dbReference>
<dbReference type="PANTHER" id="PTHR43448">
    <property type="entry name" value="PROTOHEME IX FARNESYLTRANSFERASE, MITOCHONDRIAL"/>
    <property type="match status" value="1"/>
</dbReference>
<dbReference type="Pfam" id="PF01040">
    <property type="entry name" value="UbiA"/>
    <property type="match status" value="1"/>
</dbReference>
<dbReference type="PROSITE" id="PS00943">
    <property type="entry name" value="UBIA"/>
    <property type="match status" value="1"/>
</dbReference>
<evidence type="ECO:0000255" key="1">
    <source>
        <dbReference type="HAMAP-Rule" id="MF_00154"/>
    </source>
</evidence>